<reference key="1">
    <citation type="journal article" date="2011" name="J. Bacteriol.">
        <title>Genome of Ochrobactrum anthropi ATCC 49188 T, a versatile opportunistic pathogen and symbiont of several eukaryotic hosts.</title>
        <authorList>
            <person name="Chain P.S."/>
            <person name="Lang D.M."/>
            <person name="Comerci D.J."/>
            <person name="Malfatti S.A."/>
            <person name="Vergez L.M."/>
            <person name="Shin M."/>
            <person name="Ugalde R.A."/>
            <person name="Garcia E."/>
            <person name="Tolmasky M.E."/>
        </authorList>
    </citation>
    <scope>NUCLEOTIDE SEQUENCE [LARGE SCALE GENOMIC DNA]</scope>
    <source>
        <strain>ATCC 49188 / DSM 6882 / CCUG 24695 / JCM 21032 / LMG 3331 / NBRC 15819 / NCTC 12168 / Alc 37</strain>
    </source>
</reference>
<gene>
    <name evidence="1" type="primary">purH</name>
    <name type="ordered locus">Oant_1087</name>
</gene>
<dbReference type="EC" id="2.1.2.3" evidence="1"/>
<dbReference type="EC" id="3.5.4.10" evidence="1"/>
<dbReference type="EMBL" id="CP000758">
    <property type="protein sequence ID" value="ABS13807.1"/>
    <property type="molecule type" value="Genomic_DNA"/>
</dbReference>
<dbReference type="RefSeq" id="WP_012091248.1">
    <property type="nucleotide sequence ID" value="NC_009667.1"/>
</dbReference>
<dbReference type="SMR" id="A6WXV3"/>
<dbReference type="STRING" id="439375.Oant_1087"/>
<dbReference type="KEGG" id="oan:Oant_1087"/>
<dbReference type="PATRIC" id="fig|439375.7.peg.1136"/>
<dbReference type="eggNOG" id="COG0138">
    <property type="taxonomic scope" value="Bacteria"/>
</dbReference>
<dbReference type="HOGENOM" id="CLU_016316_5_2_5"/>
<dbReference type="PhylomeDB" id="A6WXV3"/>
<dbReference type="UniPathway" id="UPA00074">
    <property type="reaction ID" value="UER00133"/>
</dbReference>
<dbReference type="UniPathway" id="UPA00074">
    <property type="reaction ID" value="UER00135"/>
</dbReference>
<dbReference type="Proteomes" id="UP000002301">
    <property type="component" value="Chromosome 1"/>
</dbReference>
<dbReference type="GO" id="GO:0005829">
    <property type="term" value="C:cytosol"/>
    <property type="evidence" value="ECO:0007669"/>
    <property type="project" value="TreeGrafter"/>
</dbReference>
<dbReference type="GO" id="GO:0003937">
    <property type="term" value="F:IMP cyclohydrolase activity"/>
    <property type="evidence" value="ECO:0007669"/>
    <property type="project" value="UniProtKB-UniRule"/>
</dbReference>
<dbReference type="GO" id="GO:0004643">
    <property type="term" value="F:phosphoribosylaminoimidazolecarboxamide formyltransferase activity"/>
    <property type="evidence" value="ECO:0007669"/>
    <property type="project" value="UniProtKB-UniRule"/>
</dbReference>
<dbReference type="GO" id="GO:0006189">
    <property type="term" value="P:'de novo' IMP biosynthetic process"/>
    <property type="evidence" value="ECO:0007669"/>
    <property type="project" value="UniProtKB-UniRule"/>
</dbReference>
<dbReference type="CDD" id="cd01421">
    <property type="entry name" value="IMPCH"/>
    <property type="match status" value="1"/>
</dbReference>
<dbReference type="FunFam" id="3.40.140.20:FF:000001">
    <property type="entry name" value="Bifunctional purine biosynthesis protein PurH"/>
    <property type="match status" value="1"/>
</dbReference>
<dbReference type="FunFam" id="3.40.140.20:FF:000002">
    <property type="entry name" value="Bifunctional purine biosynthesis protein PurH"/>
    <property type="match status" value="1"/>
</dbReference>
<dbReference type="FunFam" id="3.40.50.1380:FF:000001">
    <property type="entry name" value="Bifunctional purine biosynthesis protein PurH"/>
    <property type="match status" value="1"/>
</dbReference>
<dbReference type="Gene3D" id="3.40.140.20">
    <property type="match status" value="2"/>
</dbReference>
<dbReference type="Gene3D" id="3.40.50.1380">
    <property type="entry name" value="Methylglyoxal synthase-like domain"/>
    <property type="match status" value="1"/>
</dbReference>
<dbReference type="HAMAP" id="MF_00139">
    <property type="entry name" value="PurH"/>
    <property type="match status" value="1"/>
</dbReference>
<dbReference type="InterPro" id="IPR024051">
    <property type="entry name" value="AICAR_Tfase_dup_dom_sf"/>
</dbReference>
<dbReference type="InterPro" id="IPR016193">
    <property type="entry name" value="Cytidine_deaminase-like"/>
</dbReference>
<dbReference type="InterPro" id="IPR011607">
    <property type="entry name" value="MGS-like_dom"/>
</dbReference>
<dbReference type="InterPro" id="IPR036914">
    <property type="entry name" value="MGS-like_dom_sf"/>
</dbReference>
<dbReference type="InterPro" id="IPR002695">
    <property type="entry name" value="PurH-like"/>
</dbReference>
<dbReference type="NCBIfam" id="NF002049">
    <property type="entry name" value="PRK00881.1"/>
    <property type="match status" value="1"/>
</dbReference>
<dbReference type="NCBIfam" id="TIGR00355">
    <property type="entry name" value="purH"/>
    <property type="match status" value="1"/>
</dbReference>
<dbReference type="PANTHER" id="PTHR11692:SF0">
    <property type="entry name" value="BIFUNCTIONAL PURINE BIOSYNTHESIS PROTEIN ATIC"/>
    <property type="match status" value="1"/>
</dbReference>
<dbReference type="PANTHER" id="PTHR11692">
    <property type="entry name" value="BIFUNCTIONAL PURINE BIOSYNTHESIS PROTEIN PURH"/>
    <property type="match status" value="1"/>
</dbReference>
<dbReference type="Pfam" id="PF01808">
    <property type="entry name" value="AICARFT_IMPCHas"/>
    <property type="match status" value="1"/>
</dbReference>
<dbReference type="Pfam" id="PF02142">
    <property type="entry name" value="MGS"/>
    <property type="match status" value="1"/>
</dbReference>
<dbReference type="PIRSF" id="PIRSF000414">
    <property type="entry name" value="AICARFT_IMPCHas"/>
    <property type="match status" value="1"/>
</dbReference>
<dbReference type="SMART" id="SM00798">
    <property type="entry name" value="AICARFT_IMPCHas"/>
    <property type="match status" value="1"/>
</dbReference>
<dbReference type="SMART" id="SM00851">
    <property type="entry name" value="MGS"/>
    <property type="match status" value="1"/>
</dbReference>
<dbReference type="SUPFAM" id="SSF53927">
    <property type="entry name" value="Cytidine deaminase-like"/>
    <property type="match status" value="1"/>
</dbReference>
<dbReference type="SUPFAM" id="SSF52335">
    <property type="entry name" value="Methylglyoxal synthase-like"/>
    <property type="match status" value="1"/>
</dbReference>
<dbReference type="PROSITE" id="PS51855">
    <property type="entry name" value="MGS"/>
    <property type="match status" value="1"/>
</dbReference>
<name>PUR9_BRUA4</name>
<organism>
    <name type="scientific">Brucella anthropi (strain ATCC 49188 / DSM 6882 / CCUG 24695 / JCM 21032 / LMG 3331 / NBRC 15819 / NCTC 12168 / Alc 37)</name>
    <name type="common">Ochrobactrum anthropi</name>
    <dbReference type="NCBI Taxonomy" id="439375"/>
    <lineage>
        <taxon>Bacteria</taxon>
        <taxon>Pseudomonadati</taxon>
        <taxon>Pseudomonadota</taxon>
        <taxon>Alphaproteobacteria</taxon>
        <taxon>Hyphomicrobiales</taxon>
        <taxon>Brucellaceae</taxon>
        <taxon>Brucella/Ochrobactrum group</taxon>
        <taxon>Brucella</taxon>
    </lineage>
</organism>
<keyword id="KW-0378">Hydrolase</keyword>
<keyword id="KW-0511">Multifunctional enzyme</keyword>
<keyword id="KW-0658">Purine biosynthesis</keyword>
<keyword id="KW-1185">Reference proteome</keyword>
<keyword id="KW-0808">Transferase</keyword>
<sequence>MAVSSKHIPAPDLHRVRRALLSVSDKTGLIDFAKALHAQGVEILSTGGTAKSIAAEGIPVKDVSEVTGFPEIMDGRVKTLHPAVHGGLLAVRNDREHVAAMEEHGIGGIDLAVINLYPFEEVRFKGGDYDTTVENIDIGGPAMIRASAKNHAYVATVVDPADYADVVAELEKHAGSLPLAFRKKLAAKAFSRTAAYDAAISNWFAEAINEETPVYRSVAGKLHSVMRYGENPHQTAGFYLTGEKRPGVATATQLQGKQLSYNNINDTDAAFELVAEFDPARTAAVAIIKHANPCGVAEAATIKEAYLKALACDPVSAFGGIVALNKTLDEEAAEEIVKIFTEVIIAPDATEGAQAIVAAKKNLRLLVTGGLPDPRAKGIAAKTVAGGLLVQSRDNGVVDDLDLKVVTKRAPTEAELNDMKFAFRVGKHVKSNAIVYVKDGATVGIGAGQMSRVDSARIAARKAEDAAEAAGLAEPLTKGCVVASDAFFPFADGLLSAVQAGATAVIQPGGSMRDDEVIAAADEHGIAMVMTGMRHFRH</sequence>
<comment type="catalytic activity">
    <reaction evidence="1">
        <text>(6R)-10-formyltetrahydrofolate + 5-amino-1-(5-phospho-beta-D-ribosyl)imidazole-4-carboxamide = 5-formamido-1-(5-phospho-D-ribosyl)imidazole-4-carboxamide + (6S)-5,6,7,8-tetrahydrofolate</text>
        <dbReference type="Rhea" id="RHEA:22192"/>
        <dbReference type="ChEBI" id="CHEBI:57453"/>
        <dbReference type="ChEBI" id="CHEBI:58467"/>
        <dbReference type="ChEBI" id="CHEBI:58475"/>
        <dbReference type="ChEBI" id="CHEBI:195366"/>
        <dbReference type="EC" id="2.1.2.3"/>
    </reaction>
</comment>
<comment type="catalytic activity">
    <reaction evidence="1">
        <text>IMP + H2O = 5-formamido-1-(5-phospho-D-ribosyl)imidazole-4-carboxamide</text>
        <dbReference type="Rhea" id="RHEA:18445"/>
        <dbReference type="ChEBI" id="CHEBI:15377"/>
        <dbReference type="ChEBI" id="CHEBI:58053"/>
        <dbReference type="ChEBI" id="CHEBI:58467"/>
        <dbReference type="EC" id="3.5.4.10"/>
    </reaction>
</comment>
<comment type="pathway">
    <text evidence="1">Purine metabolism; IMP biosynthesis via de novo pathway; 5-formamido-1-(5-phospho-D-ribosyl)imidazole-4-carboxamide from 5-amino-1-(5-phospho-D-ribosyl)imidazole-4-carboxamide (10-formyl THF route): step 1/1.</text>
</comment>
<comment type="pathway">
    <text evidence="1">Purine metabolism; IMP biosynthesis via de novo pathway; IMP from 5-formamido-1-(5-phospho-D-ribosyl)imidazole-4-carboxamide: step 1/1.</text>
</comment>
<comment type="domain">
    <text evidence="1">The IMP cyclohydrolase activity resides in the N-terminal region.</text>
</comment>
<comment type="similarity">
    <text evidence="1">Belongs to the PurH family.</text>
</comment>
<accession>A6WXV3</accession>
<evidence type="ECO:0000255" key="1">
    <source>
        <dbReference type="HAMAP-Rule" id="MF_00139"/>
    </source>
</evidence>
<evidence type="ECO:0000255" key="2">
    <source>
        <dbReference type="PROSITE-ProRule" id="PRU01202"/>
    </source>
</evidence>
<protein>
    <recommendedName>
        <fullName evidence="1">Bifunctional purine biosynthesis protein PurH</fullName>
    </recommendedName>
    <domain>
        <recommendedName>
            <fullName evidence="1">Phosphoribosylaminoimidazolecarboxamide formyltransferase</fullName>
            <ecNumber evidence="1">2.1.2.3</ecNumber>
        </recommendedName>
        <alternativeName>
            <fullName evidence="1">AICAR transformylase</fullName>
        </alternativeName>
    </domain>
    <domain>
        <recommendedName>
            <fullName evidence="1">IMP cyclohydrolase</fullName>
            <ecNumber evidence="1">3.5.4.10</ecNumber>
        </recommendedName>
        <alternativeName>
            <fullName evidence="1">ATIC</fullName>
        </alternativeName>
        <alternativeName>
            <fullName evidence="1">IMP synthase</fullName>
        </alternativeName>
        <alternativeName>
            <fullName evidence="1">Inosinicase</fullName>
        </alternativeName>
    </domain>
</protein>
<proteinExistence type="inferred from homology"/>
<feature type="chain" id="PRO_1000018920" description="Bifunctional purine biosynthesis protein PurH">
    <location>
        <begin position="1"/>
        <end position="538"/>
    </location>
</feature>
<feature type="domain" description="MGS-like" evidence="2">
    <location>
        <begin position="6"/>
        <end position="158"/>
    </location>
</feature>